<protein>
    <recommendedName>
        <fullName evidence="1">D-aminoacyl-tRNA deacylase</fullName>
        <shortName evidence="1">DTD</shortName>
        <ecNumber evidence="1">3.1.1.96</ecNumber>
    </recommendedName>
    <alternativeName>
        <fullName evidence="1">Gly-tRNA(Ala) deacylase</fullName>
    </alternativeName>
</protein>
<comment type="function">
    <text evidence="1">An aminoacyl-tRNA editing enzyme that deacylates mischarged D-aminoacyl-tRNAs. Also deacylates mischarged glycyl-tRNA(Ala), protecting cells against glycine mischarging by AlaRS. Acts via tRNA-based rather than protein-based catalysis; rejects L-amino acids rather than detecting D-amino acids in the active site. By recycling D-aminoacyl-tRNA to D-amino acids and free tRNA molecules, this enzyme counteracts the toxicity associated with the formation of D-aminoacyl-tRNA entities in vivo and helps enforce protein L-homochirality.</text>
</comment>
<comment type="catalytic activity">
    <reaction evidence="1">
        <text>glycyl-tRNA(Ala) + H2O = tRNA(Ala) + glycine + H(+)</text>
        <dbReference type="Rhea" id="RHEA:53744"/>
        <dbReference type="Rhea" id="RHEA-COMP:9657"/>
        <dbReference type="Rhea" id="RHEA-COMP:13640"/>
        <dbReference type="ChEBI" id="CHEBI:15377"/>
        <dbReference type="ChEBI" id="CHEBI:15378"/>
        <dbReference type="ChEBI" id="CHEBI:57305"/>
        <dbReference type="ChEBI" id="CHEBI:78442"/>
        <dbReference type="ChEBI" id="CHEBI:78522"/>
        <dbReference type="EC" id="3.1.1.96"/>
    </reaction>
</comment>
<comment type="catalytic activity">
    <reaction evidence="1">
        <text>a D-aminoacyl-tRNA + H2O = a tRNA + a D-alpha-amino acid + H(+)</text>
        <dbReference type="Rhea" id="RHEA:13953"/>
        <dbReference type="Rhea" id="RHEA-COMP:10123"/>
        <dbReference type="Rhea" id="RHEA-COMP:10124"/>
        <dbReference type="ChEBI" id="CHEBI:15377"/>
        <dbReference type="ChEBI" id="CHEBI:15378"/>
        <dbReference type="ChEBI" id="CHEBI:59871"/>
        <dbReference type="ChEBI" id="CHEBI:78442"/>
        <dbReference type="ChEBI" id="CHEBI:79333"/>
        <dbReference type="EC" id="3.1.1.96"/>
    </reaction>
</comment>
<comment type="subunit">
    <text evidence="1">Homodimer.</text>
</comment>
<comment type="subcellular location">
    <subcellularLocation>
        <location evidence="1">Cytoplasm</location>
    </subcellularLocation>
</comment>
<comment type="domain">
    <text evidence="1">A Gly-cisPro motif from one monomer fits into the active site of the other monomer to allow specific chiral rejection of L-amino acids.</text>
</comment>
<comment type="similarity">
    <text evidence="1">Belongs to the DTD family.</text>
</comment>
<proteinExistence type="inferred from homology"/>
<evidence type="ECO:0000255" key="1">
    <source>
        <dbReference type="HAMAP-Rule" id="MF_00518"/>
    </source>
</evidence>
<gene>
    <name evidence="1" type="primary">dtd</name>
    <name type="ordered locus">SeD_A4417</name>
</gene>
<feature type="chain" id="PRO_1000127566" description="D-aminoacyl-tRNA deacylase">
    <location>
        <begin position="1"/>
        <end position="145"/>
    </location>
</feature>
<feature type="short sequence motif" description="Gly-cisPro motif, important for rejection of L-amino acids" evidence="1">
    <location>
        <begin position="137"/>
        <end position="138"/>
    </location>
</feature>
<dbReference type="EC" id="3.1.1.96" evidence="1"/>
<dbReference type="EMBL" id="CP001144">
    <property type="protein sequence ID" value="ACH77473.1"/>
    <property type="molecule type" value="Genomic_DNA"/>
</dbReference>
<dbReference type="RefSeq" id="WP_000560969.1">
    <property type="nucleotide sequence ID" value="NC_011205.1"/>
</dbReference>
<dbReference type="SMR" id="B5FP17"/>
<dbReference type="KEGG" id="sed:SeD_A4417"/>
<dbReference type="HOGENOM" id="CLU_076901_1_0_6"/>
<dbReference type="Proteomes" id="UP000008322">
    <property type="component" value="Chromosome"/>
</dbReference>
<dbReference type="GO" id="GO:0005737">
    <property type="term" value="C:cytoplasm"/>
    <property type="evidence" value="ECO:0007669"/>
    <property type="project" value="UniProtKB-SubCell"/>
</dbReference>
<dbReference type="GO" id="GO:0051500">
    <property type="term" value="F:D-tyrosyl-tRNA(Tyr) deacylase activity"/>
    <property type="evidence" value="ECO:0007669"/>
    <property type="project" value="TreeGrafter"/>
</dbReference>
<dbReference type="GO" id="GO:0106026">
    <property type="term" value="F:Gly-tRNA(Ala) deacylase activity"/>
    <property type="evidence" value="ECO:0007669"/>
    <property type="project" value="UniProtKB-UniRule"/>
</dbReference>
<dbReference type="GO" id="GO:0043908">
    <property type="term" value="F:Ser(Gly)-tRNA(Ala) hydrolase activity"/>
    <property type="evidence" value="ECO:0007669"/>
    <property type="project" value="UniProtKB-UniRule"/>
</dbReference>
<dbReference type="GO" id="GO:0000049">
    <property type="term" value="F:tRNA binding"/>
    <property type="evidence" value="ECO:0007669"/>
    <property type="project" value="UniProtKB-UniRule"/>
</dbReference>
<dbReference type="GO" id="GO:0019478">
    <property type="term" value="P:D-amino acid catabolic process"/>
    <property type="evidence" value="ECO:0007669"/>
    <property type="project" value="UniProtKB-UniRule"/>
</dbReference>
<dbReference type="CDD" id="cd00563">
    <property type="entry name" value="Dtyr_deacylase"/>
    <property type="match status" value="1"/>
</dbReference>
<dbReference type="FunFam" id="3.50.80.10:FF:000001">
    <property type="entry name" value="D-aminoacyl-tRNA deacylase"/>
    <property type="match status" value="1"/>
</dbReference>
<dbReference type="Gene3D" id="3.50.80.10">
    <property type="entry name" value="D-tyrosyl-tRNA(Tyr) deacylase"/>
    <property type="match status" value="1"/>
</dbReference>
<dbReference type="HAMAP" id="MF_00518">
    <property type="entry name" value="Deacylase_Dtd"/>
    <property type="match status" value="1"/>
</dbReference>
<dbReference type="InterPro" id="IPR003732">
    <property type="entry name" value="Daa-tRNA_deacyls_DTD"/>
</dbReference>
<dbReference type="InterPro" id="IPR023509">
    <property type="entry name" value="DTD-like_sf"/>
</dbReference>
<dbReference type="NCBIfam" id="TIGR00256">
    <property type="entry name" value="D-aminoacyl-tRNA deacylase"/>
    <property type="match status" value="1"/>
</dbReference>
<dbReference type="PANTHER" id="PTHR10472:SF5">
    <property type="entry name" value="D-AMINOACYL-TRNA DEACYLASE 1"/>
    <property type="match status" value="1"/>
</dbReference>
<dbReference type="PANTHER" id="PTHR10472">
    <property type="entry name" value="D-TYROSYL-TRNA TYR DEACYLASE"/>
    <property type="match status" value="1"/>
</dbReference>
<dbReference type="Pfam" id="PF02580">
    <property type="entry name" value="Tyr_Deacylase"/>
    <property type="match status" value="1"/>
</dbReference>
<dbReference type="SUPFAM" id="SSF69500">
    <property type="entry name" value="DTD-like"/>
    <property type="match status" value="1"/>
</dbReference>
<name>DTD_SALDC</name>
<sequence>MIALIQRVTRASVTVEDEVTGEIGPGLLVLLGVEKEDDEQKANRLCERVLGYRIFSDADGKMNLNVQQAGGSVLVVSQFTLAADTERGMRPSFSGGAAPDRAQALYEYFVERCRQQAINTQTGRFAADMQVELVNDGPVTFWLQV</sequence>
<organism>
    <name type="scientific">Salmonella dublin (strain CT_02021853)</name>
    <dbReference type="NCBI Taxonomy" id="439851"/>
    <lineage>
        <taxon>Bacteria</taxon>
        <taxon>Pseudomonadati</taxon>
        <taxon>Pseudomonadota</taxon>
        <taxon>Gammaproteobacteria</taxon>
        <taxon>Enterobacterales</taxon>
        <taxon>Enterobacteriaceae</taxon>
        <taxon>Salmonella</taxon>
    </lineage>
</organism>
<keyword id="KW-0963">Cytoplasm</keyword>
<keyword id="KW-0378">Hydrolase</keyword>
<keyword id="KW-0694">RNA-binding</keyword>
<keyword id="KW-0820">tRNA-binding</keyword>
<reference key="1">
    <citation type="journal article" date="2011" name="J. Bacteriol.">
        <title>Comparative genomics of 28 Salmonella enterica isolates: evidence for CRISPR-mediated adaptive sublineage evolution.</title>
        <authorList>
            <person name="Fricke W.F."/>
            <person name="Mammel M.K."/>
            <person name="McDermott P.F."/>
            <person name="Tartera C."/>
            <person name="White D.G."/>
            <person name="Leclerc J.E."/>
            <person name="Ravel J."/>
            <person name="Cebula T.A."/>
        </authorList>
    </citation>
    <scope>NUCLEOTIDE SEQUENCE [LARGE SCALE GENOMIC DNA]</scope>
    <source>
        <strain>CT_02021853</strain>
    </source>
</reference>
<accession>B5FP17</accession>